<gene>
    <name evidence="1" type="primary">mltF</name>
    <name type="ordered locus">PM0045</name>
</gene>
<name>MLTF_PASMU</name>
<accession>Q9CPJ2</accession>
<reference key="1">
    <citation type="journal article" date="2001" name="Proc. Natl. Acad. Sci. U.S.A.">
        <title>Complete genomic sequence of Pasteurella multocida Pm70.</title>
        <authorList>
            <person name="May B.J."/>
            <person name="Zhang Q."/>
            <person name="Li L.L."/>
            <person name="Paustian M.L."/>
            <person name="Whittam T.S."/>
            <person name="Kapur V."/>
        </authorList>
    </citation>
    <scope>NUCLEOTIDE SEQUENCE [LARGE SCALE GENOMIC DNA]</scope>
    <source>
        <strain>Pm70</strain>
    </source>
</reference>
<sequence length="492" mass="56176">MKGLFLRIIAIVALLLWAIDMVFPWQQIMRSEENRYTAIQSRGKLVVGTINNPISYFIDHAGQAAGLEYELSKAFADYLNVDLEILAMSNGDELFSALKNNKIDIAAANLLYQPNKLDMFQVGPTYNSASWQLVYRKGTERPRSLGELKGSLSIASGSELTELLKVEKEKYPDLIWRVNEKLTPEELLIQMADGKIDYVIANSIDVSAVQQIKPNVAVAFDVTDESTVHWYLPSNSYSELQASLLDFMNSAIETGLIARIEEKYFNHLAQFDYVDTRSYLRAIETVLPKFAPLFEKYKGDLDWCLLAAIAYQESHWNPDATSPTGVRGMMMLTKATAERMRIQDRTDPEQSIKAGSEYLHWLITQMPDTIKEDERIWFALAAYNMGLGHLLDARRLTKSLGGDPDNWLDVKKNLPLLAEKRYYTGLKYGYARGYEAYHYVENIRRYMNSIVHYYRVQQAQIEETLDTQAAEIENINEIKKETDTLATTVTTQ</sequence>
<evidence type="ECO:0000255" key="1">
    <source>
        <dbReference type="HAMAP-Rule" id="MF_02016"/>
    </source>
</evidence>
<evidence type="ECO:0000305" key="2"/>
<keyword id="KW-0998">Cell outer membrane</keyword>
<keyword id="KW-0961">Cell wall biogenesis/degradation</keyword>
<keyword id="KW-0456">Lyase</keyword>
<keyword id="KW-0472">Membrane</keyword>
<keyword id="KW-1185">Reference proteome</keyword>
<keyword id="KW-0732">Signal</keyword>
<comment type="function">
    <text evidence="1">Murein-degrading enzyme that degrades murein glycan strands and insoluble, high-molecular weight murein sacculi, with the concomitant formation of a 1,6-anhydromuramoyl product. Lytic transglycosylases (LTs) play an integral role in the metabolism of the peptidoglycan (PG) sacculus. Their lytic action creates space within the PG sacculus to allow for its expansion as well as for the insertion of various structures such as secretion systems and flagella.</text>
</comment>
<comment type="catalytic activity">
    <reaction evidence="1">
        <text>Exolytic cleavage of the (1-&gt;4)-beta-glycosidic linkage between N-acetylmuramic acid (MurNAc) and N-acetylglucosamine (GlcNAc) residues in peptidoglycan, from either the reducing or the non-reducing ends of the peptidoglycan chains, with concomitant formation of a 1,6-anhydrobond in the MurNAc residue.</text>
        <dbReference type="EC" id="4.2.2.n1"/>
    </reaction>
</comment>
<comment type="subcellular location">
    <subcellularLocation>
        <location>Cell outer membrane</location>
        <topology>Peripheral membrane protein</topology>
    </subcellularLocation>
    <text evidence="1">Attached to the inner leaflet of the outer membrane.</text>
</comment>
<comment type="domain">
    <text evidence="1">The N-terminal domain does not have lytic activity and probably modulates enzymatic activity. The C-terminal domain is the catalytic active domain.</text>
</comment>
<comment type="similarity">
    <text evidence="1">In the N-terminal section; belongs to the bacterial solute-binding protein 3 family.</text>
</comment>
<comment type="similarity">
    <text evidence="1">In the C-terminal section; belongs to the transglycosylase Slt family.</text>
</comment>
<comment type="sequence caution" evidence="2">
    <conflict type="erroneous initiation">
        <sequence resource="EMBL-CDS" id="AAK02129"/>
    </conflict>
</comment>
<organism>
    <name type="scientific">Pasteurella multocida (strain Pm70)</name>
    <dbReference type="NCBI Taxonomy" id="272843"/>
    <lineage>
        <taxon>Bacteria</taxon>
        <taxon>Pseudomonadati</taxon>
        <taxon>Pseudomonadota</taxon>
        <taxon>Gammaproteobacteria</taxon>
        <taxon>Pasteurellales</taxon>
        <taxon>Pasteurellaceae</taxon>
        <taxon>Pasteurella</taxon>
    </lineage>
</organism>
<dbReference type="EC" id="4.2.2.n1" evidence="1"/>
<dbReference type="EMBL" id="AE004439">
    <property type="protein sequence ID" value="AAK02129.1"/>
    <property type="status" value="ALT_INIT"/>
    <property type="molecule type" value="Genomic_DNA"/>
</dbReference>
<dbReference type="RefSeq" id="WP_041422488.1">
    <property type="nucleotide sequence ID" value="NC_002663.1"/>
</dbReference>
<dbReference type="SMR" id="Q9CPJ2"/>
<dbReference type="STRING" id="272843.PM0045"/>
<dbReference type="CAZy" id="GH23">
    <property type="family name" value="Glycoside Hydrolase Family 23"/>
</dbReference>
<dbReference type="EnsemblBacteria" id="AAK02129">
    <property type="protein sequence ID" value="AAK02129"/>
    <property type="gene ID" value="PM0045"/>
</dbReference>
<dbReference type="KEGG" id="pmu:PM0045"/>
<dbReference type="PATRIC" id="fig|272843.6.peg.45"/>
<dbReference type="HOGENOM" id="CLU_027494_0_1_6"/>
<dbReference type="OrthoDB" id="9815002at2"/>
<dbReference type="Proteomes" id="UP000000809">
    <property type="component" value="Chromosome"/>
</dbReference>
<dbReference type="GO" id="GO:0009279">
    <property type="term" value="C:cell outer membrane"/>
    <property type="evidence" value="ECO:0007669"/>
    <property type="project" value="UniProtKB-SubCell"/>
</dbReference>
<dbReference type="GO" id="GO:0008933">
    <property type="term" value="F:peptidoglycan lytic transglycosylase activity"/>
    <property type="evidence" value="ECO:0007669"/>
    <property type="project" value="UniProtKB-UniRule"/>
</dbReference>
<dbReference type="GO" id="GO:0016998">
    <property type="term" value="P:cell wall macromolecule catabolic process"/>
    <property type="evidence" value="ECO:0007669"/>
    <property type="project" value="UniProtKB-UniRule"/>
</dbReference>
<dbReference type="GO" id="GO:0071555">
    <property type="term" value="P:cell wall organization"/>
    <property type="evidence" value="ECO:0007669"/>
    <property type="project" value="UniProtKB-KW"/>
</dbReference>
<dbReference type="GO" id="GO:0009253">
    <property type="term" value="P:peptidoglycan catabolic process"/>
    <property type="evidence" value="ECO:0007669"/>
    <property type="project" value="TreeGrafter"/>
</dbReference>
<dbReference type="CDD" id="cd13403">
    <property type="entry name" value="MLTF-like"/>
    <property type="match status" value="1"/>
</dbReference>
<dbReference type="CDD" id="cd01009">
    <property type="entry name" value="PBP2_YfhD_N"/>
    <property type="match status" value="1"/>
</dbReference>
<dbReference type="FunFam" id="1.10.530.10:FF:000003">
    <property type="entry name" value="Membrane-bound lytic murein transglycosylase F"/>
    <property type="match status" value="1"/>
</dbReference>
<dbReference type="Gene3D" id="1.10.530.10">
    <property type="match status" value="1"/>
</dbReference>
<dbReference type="Gene3D" id="3.40.190.10">
    <property type="entry name" value="Periplasmic binding protein-like II"/>
    <property type="match status" value="2"/>
</dbReference>
<dbReference type="HAMAP" id="MF_02016">
    <property type="entry name" value="MltF"/>
    <property type="match status" value="1"/>
</dbReference>
<dbReference type="InterPro" id="IPR023346">
    <property type="entry name" value="Lysozyme-like_dom_sf"/>
</dbReference>
<dbReference type="InterPro" id="IPR023703">
    <property type="entry name" value="MltF"/>
</dbReference>
<dbReference type="InterPro" id="IPR001638">
    <property type="entry name" value="Solute-binding_3/MltF_N"/>
</dbReference>
<dbReference type="InterPro" id="IPR000189">
    <property type="entry name" value="Transglyc_AS"/>
</dbReference>
<dbReference type="InterPro" id="IPR008258">
    <property type="entry name" value="Transglycosylase_SLT_dom_1"/>
</dbReference>
<dbReference type="NCBIfam" id="NF008112">
    <property type="entry name" value="PRK10859.1"/>
    <property type="match status" value="1"/>
</dbReference>
<dbReference type="PANTHER" id="PTHR35936">
    <property type="entry name" value="MEMBRANE-BOUND LYTIC MUREIN TRANSGLYCOSYLASE F"/>
    <property type="match status" value="1"/>
</dbReference>
<dbReference type="PANTHER" id="PTHR35936:SF32">
    <property type="entry name" value="MEMBRANE-BOUND LYTIC MUREIN TRANSGLYCOSYLASE F"/>
    <property type="match status" value="1"/>
</dbReference>
<dbReference type="Pfam" id="PF00497">
    <property type="entry name" value="SBP_bac_3"/>
    <property type="match status" value="1"/>
</dbReference>
<dbReference type="Pfam" id="PF01464">
    <property type="entry name" value="SLT"/>
    <property type="match status" value="1"/>
</dbReference>
<dbReference type="SMART" id="SM00062">
    <property type="entry name" value="PBPb"/>
    <property type="match status" value="1"/>
</dbReference>
<dbReference type="SUPFAM" id="SSF53955">
    <property type="entry name" value="Lysozyme-like"/>
    <property type="match status" value="1"/>
</dbReference>
<dbReference type="SUPFAM" id="SSF53850">
    <property type="entry name" value="Periplasmic binding protein-like II"/>
    <property type="match status" value="1"/>
</dbReference>
<dbReference type="PROSITE" id="PS00922">
    <property type="entry name" value="TRANSGLYCOSYLASE"/>
    <property type="match status" value="1"/>
</dbReference>
<protein>
    <recommendedName>
        <fullName evidence="1">Membrane-bound lytic murein transglycosylase F</fullName>
        <ecNumber evidence="1">4.2.2.n1</ecNumber>
    </recommendedName>
    <alternativeName>
        <fullName evidence="1">Murein lyase F</fullName>
    </alternativeName>
</protein>
<feature type="signal peptide" evidence="1">
    <location>
        <begin position="1"/>
        <end position="18"/>
    </location>
</feature>
<feature type="chain" id="PRO_0000353952" description="Membrane-bound lytic murein transglycosylase F">
    <location>
        <begin position="19"/>
        <end position="492"/>
    </location>
</feature>
<feature type="region of interest" description="Non-LT domain" evidence="1">
    <location>
        <begin position="19"/>
        <end position="268"/>
    </location>
</feature>
<feature type="region of interest" description="LT domain" evidence="1">
    <location>
        <begin position="270"/>
        <end position="492"/>
    </location>
</feature>
<feature type="active site" evidence="1">
    <location>
        <position position="313"/>
    </location>
</feature>
<proteinExistence type="inferred from homology"/>